<organism>
    <name type="scientific">Campylobacter jejuni subsp. doylei (strain ATCC BAA-1458 / RM4099 / 269.97)</name>
    <dbReference type="NCBI Taxonomy" id="360109"/>
    <lineage>
        <taxon>Bacteria</taxon>
        <taxon>Pseudomonadati</taxon>
        <taxon>Campylobacterota</taxon>
        <taxon>Epsilonproteobacteria</taxon>
        <taxon>Campylobacterales</taxon>
        <taxon>Campylobacteraceae</taxon>
        <taxon>Campylobacter</taxon>
    </lineage>
</organism>
<accession>A7H1S0</accession>
<evidence type="ECO:0000255" key="1">
    <source>
        <dbReference type="HAMAP-Rule" id="MF_00184"/>
    </source>
</evidence>
<name>SYT_CAMJD</name>
<proteinExistence type="inferred from homology"/>
<reference key="1">
    <citation type="submission" date="2007-07" db="EMBL/GenBank/DDBJ databases">
        <title>Complete genome sequence of Campylobacter jejuni subsp doylei 269.97 isolated from human blood.</title>
        <authorList>
            <person name="Fouts D.E."/>
            <person name="Mongodin E.F."/>
            <person name="Puiu D."/>
            <person name="Sebastian Y."/>
            <person name="Miller W.G."/>
            <person name="Mandrell R.E."/>
            <person name="Lastovica A.J."/>
            <person name="Nelson K.E."/>
        </authorList>
    </citation>
    <scope>NUCLEOTIDE SEQUENCE [LARGE SCALE GENOMIC DNA]</scope>
    <source>
        <strain>ATCC BAA-1458 / RM4099 / 269.97</strain>
    </source>
</reference>
<comment type="function">
    <text evidence="1">Catalyzes the attachment of threonine to tRNA(Thr) in a two-step reaction: L-threonine is first activated by ATP to form Thr-AMP and then transferred to the acceptor end of tRNA(Thr). Also edits incorrectly charged L-seryl-tRNA(Thr).</text>
</comment>
<comment type="catalytic activity">
    <reaction evidence="1">
        <text>tRNA(Thr) + L-threonine + ATP = L-threonyl-tRNA(Thr) + AMP + diphosphate + H(+)</text>
        <dbReference type="Rhea" id="RHEA:24624"/>
        <dbReference type="Rhea" id="RHEA-COMP:9670"/>
        <dbReference type="Rhea" id="RHEA-COMP:9704"/>
        <dbReference type="ChEBI" id="CHEBI:15378"/>
        <dbReference type="ChEBI" id="CHEBI:30616"/>
        <dbReference type="ChEBI" id="CHEBI:33019"/>
        <dbReference type="ChEBI" id="CHEBI:57926"/>
        <dbReference type="ChEBI" id="CHEBI:78442"/>
        <dbReference type="ChEBI" id="CHEBI:78534"/>
        <dbReference type="ChEBI" id="CHEBI:456215"/>
        <dbReference type="EC" id="6.1.1.3"/>
    </reaction>
</comment>
<comment type="cofactor">
    <cofactor evidence="1">
        <name>Zn(2+)</name>
        <dbReference type="ChEBI" id="CHEBI:29105"/>
    </cofactor>
    <text evidence="1">Binds 1 zinc ion per subunit.</text>
</comment>
<comment type="subunit">
    <text evidence="1">Homodimer.</text>
</comment>
<comment type="subcellular location">
    <subcellularLocation>
        <location evidence="1">Cytoplasm</location>
    </subcellularLocation>
</comment>
<comment type="similarity">
    <text evidence="1">Belongs to the class-II aminoacyl-tRNA synthetase family.</text>
</comment>
<gene>
    <name evidence="1" type="primary">thrS</name>
    <name type="ordered locus">JJD26997_0216</name>
</gene>
<protein>
    <recommendedName>
        <fullName evidence="1">Threonine--tRNA ligase</fullName>
        <ecNumber evidence="1">6.1.1.3</ecNumber>
    </recommendedName>
    <alternativeName>
        <fullName evidence="1">Threonyl-tRNA synthetase</fullName>
        <shortName evidence="1">ThrRS</shortName>
    </alternativeName>
</protein>
<dbReference type="EC" id="6.1.1.3" evidence="1"/>
<dbReference type="EMBL" id="CP000768">
    <property type="protein sequence ID" value="ABS43184.1"/>
    <property type="molecule type" value="Genomic_DNA"/>
</dbReference>
<dbReference type="SMR" id="A7H1S0"/>
<dbReference type="KEGG" id="cjd:JJD26997_0216"/>
<dbReference type="HOGENOM" id="CLU_008554_0_1_7"/>
<dbReference type="Proteomes" id="UP000002302">
    <property type="component" value="Chromosome"/>
</dbReference>
<dbReference type="GO" id="GO:0005829">
    <property type="term" value="C:cytosol"/>
    <property type="evidence" value="ECO:0007669"/>
    <property type="project" value="TreeGrafter"/>
</dbReference>
<dbReference type="GO" id="GO:0005524">
    <property type="term" value="F:ATP binding"/>
    <property type="evidence" value="ECO:0007669"/>
    <property type="project" value="UniProtKB-UniRule"/>
</dbReference>
<dbReference type="GO" id="GO:0046872">
    <property type="term" value="F:metal ion binding"/>
    <property type="evidence" value="ECO:0007669"/>
    <property type="project" value="UniProtKB-KW"/>
</dbReference>
<dbReference type="GO" id="GO:0004829">
    <property type="term" value="F:threonine-tRNA ligase activity"/>
    <property type="evidence" value="ECO:0007669"/>
    <property type="project" value="UniProtKB-UniRule"/>
</dbReference>
<dbReference type="GO" id="GO:0000049">
    <property type="term" value="F:tRNA binding"/>
    <property type="evidence" value="ECO:0007669"/>
    <property type="project" value="UniProtKB-KW"/>
</dbReference>
<dbReference type="GO" id="GO:0006435">
    <property type="term" value="P:threonyl-tRNA aminoacylation"/>
    <property type="evidence" value="ECO:0007669"/>
    <property type="project" value="UniProtKB-UniRule"/>
</dbReference>
<dbReference type="CDD" id="cd00860">
    <property type="entry name" value="ThrRS_anticodon"/>
    <property type="match status" value="1"/>
</dbReference>
<dbReference type="CDD" id="cd00771">
    <property type="entry name" value="ThrRS_core"/>
    <property type="match status" value="1"/>
</dbReference>
<dbReference type="FunFam" id="3.30.930.10:FF:000019">
    <property type="entry name" value="Threonine--tRNA ligase"/>
    <property type="match status" value="1"/>
</dbReference>
<dbReference type="FunFam" id="3.30.980.10:FF:000005">
    <property type="entry name" value="Threonyl-tRNA synthetase, mitochondrial"/>
    <property type="match status" value="1"/>
</dbReference>
<dbReference type="Gene3D" id="3.30.54.20">
    <property type="match status" value="1"/>
</dbReference>
<dbReference type="Gene3D" id="3.40.50.800">
    <property type="entry name" value="Anticodon-binding domain"/>
    <property type="match status" value="1"/>
</dbReference>
<dbReference type="Gene3D" id="3.30.930.10">
    <property type="entry name" value="Bira Bifunctional Protein, Domain 2"/>
    <property type="match status" value="1"/>
</dbReference>
<dbReference type="Gene3D" id="3.30.980.10">
    <property type="entry name" value="Threonyl-trna Synthetase, Chain A, domain 2"/>
    <property type="match status" value="1"/>
</dbReference>
<dbReference type="HAMAP" id="MF_00184">
    <property type="entry name" value="Thr_tRNA_synth"/>
    <property type="match status" value="1"/>
</dbReference>
<dbReference type="InterPro" id="IPR002314">
    <property type="entry name" value="aa-tRNA-synt_IIb"/>
</dbReference>
<dbReference type="InterPro" id="IPR006195">
    <property type="entry name" value="aa-tRNA-synth_II"/>
</dbReference>
<dbReference type="InterPro" id="IPR045864">
    <property type="entry name" value="aa-tRNA-synth_II/BPL/LPL"/>
</dbReference>
<dbReference type="InterPro" id="IPR004154">
    <property type="entry name" value="Anticodon-bd"/>
</dbReference>
<dbReference type="InterPro" id="IPR036621">
    <property type="entry name" value="Anticodon-bd_dom_sf"/>
</dbReference>
<dbReference type="InterPro" id="IPR002320">
    <property type="entry name" value="Thr-tRNA-ligase_IIa"/>
</dbReference>
<dbReference type="InterPro" id="IPR018163">
    <property type="entry name" value="Thr/Ala-tRNA-synth_IIc_edit"/>
</dbReference>
<dbReference type="InterPro" id="IPR047246">
    <property type="entry name" value="ThrRS_anticodon"/>
</dbReference>
<dbReference type="InterPro" id="IPR033728">
    <property type="entry name" value="ThrRS_core"/>
</dbReference>
<dbReference type="InterPro" id="IPR012947">
    <property type="entry name" value="tRNA_SAD"/>
</dbReference>
<dbReference type="NCBIfam" id="TIGR00418">
    <property type="entry name" value="thrS"/>
    <property type="match status" value="1"/>
</dbReference>
<dbReference type="PANTHER" id="PTHR11451:SF44">
    <property type="entry name" value="THREONINE--TRNA LIGASE, CHLOROPLASTIC_MITOCHONDRIAL 2"/>
    <property type="match status" value="1"/>
</dbReference>
<dbReference type="PANTHER" id="PTHR11451">
    <property type="entry name" value="THREONINE-TRNA LIGASE"/>
    <property type="match status" value="1"/>
</dbReference>
<dbReference type="Pfam" id="PF03129">
    <property type="entry name" value="HGTP_anticodon"/>
    <property type="match status" value="1"/>
</dbReference>
<dbReference type="Pfam" id="PF00587">
    <property type="entry name" value="tRNA-synt_2b"/>
    <property type="match status" value="1"/>
</dbReference>
<dbReference type="Pfam" id="PF07973">
    <property type="entry name" value="tRNA_SAD"/>
    <property type="match status" value="1"/>
</dbReference>
<dbReference type="PRINTS" id="PR01047">
    <property type="entry name" value="TRNASYNTHTHR"/>
</dbReference>
<dbReference type="SMART" id="SM00863">
    <property type="entry name" value="tRNA_SAD"/>
    <property type="match status" value="1"/>
</dbReference>
<dbReference type="SUPFAM" id="SSF52954">
    <property type="entry name" value="Class II aaRS ABD-related"/>
    <property type="match status" value="1"/>
</dbReference>
<dbReference type="SUPFAM" id="SSF55681">
    <property type="entry name" value="Class II aaRS and biotin synthetases"/>
    <property type="match status" value="1"/>
</dbReference>
<dbReference type="SUPFAM" id="SSF55186">
    <property type="entry name" value="ThrRS/AlaRS common domain"/>
    <property type="match status" value="1"/>
</dbReference>
<dbReference type="PROSITE" id="PS50862">
    <property type="entry name" value="AA_TRNA_LIGASE_II"/>
    <property type="match status" value="1"/>
</dbReference>
<keyword id="KW-0030">Aminoacyl-tRNA synthetase</keyword>
<keyword id="KW-0067">ATP-binding</keyword>
<keyword id="KW-0963">Cytoplasm</keyword>
<keyword id="KW-0436">Ligase</keyword>
<keyword id="KW-0479">Metal-binding</keyword>
<keyword id="KW-0547">Nucleotide-binding</keyword>
<keyword id="KW-0648">Protein biosynthesis</keyword>
<keyword id="KW-0694">RNA-binding</keyword>
<keyword id="KW-0820">tRNA-binding</keyword>
<keyword id="KW-0862">Zinc</keyword>
<feature type="chain" id="PRO_1000020362" description="Threonine--tRNA ligase">
    <location>
        <begin position="1"/>
        <end position="602"/>
    </location>
</feature>
<feature type="region of interest" description="Catalytic" evidence="1">
    <location>
        <begin position="208"/>
        <end position="499"/>
    </location>
</feature>
<feature type="binding site" evidence="1">
    <location>
        <position position="300"/>
    </location>
    <ligand>
        <name>Zn(2+)</name>
        <dbReference type="ChEBI" id="CHEBI:29105"/>
    </ligand>
</feature>
<feature type="binding site" evidence="1">
    <location>
        <position position="351"/>
    </location>
    <ligand>
        <name>Zn(2+)</name>
        <dbReference type="ChEBI" id="CHEBI:29105"/>
    </ligand>
</feature>
<feature type="binding site" evidence="1">
    <location>
        <position position="476"/>
    </location>
    <ligand>
        <name>Zn(2+)</name>
        <dbReference type="ChEBI" id="CHEBI:29105"/>
    </ligand>
</feature>
<sequence>MEKEVIAYLDNETIIDSQSVKNTNLKEIYFDNSKESLEVIRHSCAHLMAQAIKSLYPEAKFFVGPVIEDGFYYDFCVESKIGEEDLVKIEKKMKELAEAKIEISKYKITKNEALAKFQNDDLKQEVLLRIPDGAVSIYKQGEFEDLCRGPHVPNTKFLRFFKLTRVAGAYLGGDEKREMLTRIYGTAFADKESLKEYLAIIEEAKKRDHRKLGIELKLFTFNDEIGGGLPIWLGNGARLRSKLEHMLYKIHRLRGYEPVRGPELLKADAWKISGHYANYKENMYFTQIDEQEYGIKPMNCVGHIKVYQSDVRSYRDLPLKFFEYGVVHRHEKSGVLHGLFRVREFTQDDAHIFCMPSQIKEQVLEILAFVDNLMKLFDFSYEMEISTKPEKAIGDDEIWEVATKALKEALDEQGLKYGIDEGGGAFYGPKIDIKITDALKRKWQCGTIQVDFNLPSRFKLEYTDSDNEKKQPVMLHRAILGSFERFIGILTEHCAGEFPFFIAPTAVGIVPIGEAHIAYAKEIQKELLELNIDSEVYEKNESLSKKIRIAEKQKLPMILVLGDDEVAKRSVALRDRRAKEQKNLSLDEFIKLVKEKMSEVYF</sequence>